<organism>
    <name type="scientific">Metarhizium robertsii (strain ARSEF 23 / ATCC MYA-3075)</name>
    <name type="common">Metarhizium anisopliae (strain ARSEF 23)</name>
    <dbReference type="NCBI Taxonomy" id="655844"/>
    <lineage>
        <taxon>Eukaryota</taxon>
        <taxon>Fungi</taxon>
        <taxon>Dikarya</taxon>
        <taxon>Ascomycota</taxon>
        <taxon>Pezizomycotina</taxon>
        <taxon>Sordariomycetes</taxon>
        <taxon>Hypocreomycetidae</taxon>
        <taxon>Hypocreales</taxon>
        <taxon>Clavicipitaceae</taxon>
        <taxon>Metarhizium</taxon>
    </lineage>
</organism>
<accession>E9F9R9</accession>
<proteinExistence type="inferred from homology"/>
<sequence>MHHLRALVGVGLAGLAAGVPLTDKISVKPRQAPGAQNVVYWGQNGGGTIENNDLAAYCQPNSGIDVLVLAFLYQFGNGGNIPSGTIGQSCYISTSGQGQNCEALTAAIHTCQSAGVKIILSLGGATSSYSLQTQAQAEQIGQYLWDSYGNSGNKTVQRPFGSNFVNGFDFDIEVNGGSSQYYQYMIAKLRSNFASDKSNTYLITGAPQCPIPEPNMGVIISNSVFDHLYVQFYNNNNYTVPCALGINGNAPFNYNNWTSFIADTPSAGAKIFIGVPASPLASTGTPSGAQYYAAPDQLAAIVGEYRSDAHFGGIMMWSAGFSDANVNNGCTYAQQAKSILVNGAPCASSGPPSSTPATAPAPTATTMPSSTSVSSPAASPTGGTVPQWGQCGGEGYSGPTQCVAPYQCVKQGDWWSSCR</sequence>
<dbReference type="EC" id="3.2.1.14"/>
<dbReference type="EMBL" id="ADNJ02000006">
    <property type="protein sequence ID" value="EFY95562.2"/>
    <property type="molecule type" value="Genomic_DNA"/>
</dbReference>
<dbReference type="RefSeq" id="XP_007825207.2">
    <property type="nucleotide sequence ID" value="XM_007827016.2"/>
</dbReference>
<dbReference type="SMR" id="E9F9R9"/>
<dbReference type="CAZy" id="GH18">
    <property type="family name" value="Glycoside Hydrolase Family 18"/>
</dbReference>
<dbReference type="GlyCosmos" id="E9F9R9">
    <property type="glycosylation" value="3 sites, No reported glycans"/>
</dbReference>
<dbReference type="GeneID" id="19263304"/>
<dbReference type="KEGG" id="maj:MAA_09018"/>
<dbReference type="HOGENOM" id="CLU_007818_6_1_1"/>
<dbReference type="OrthoDB" id="6020543at2759"/>
<dbReference type="Proteomes" id="UP000002498">
    <property type="component" value="Unassembled WGS sequence"/>
</dbReference>
<dbReference type="GO" id="GO:0005576">
    <property type="term" value="C:extracellular region"/>
    <property type="evidence" value="ECO:0007669"/>
    <property type="project" value="UniProtKB-SubCell"/>
</dbReference>
<dbReference type="GO" id="GO:0030248">
    <property type="term" value="F:cellulose binding"/>
    <property type="evidence" value="ECO:0007669"/>
    <property type="project" value="InterPro"/>
</dbReference>
<dbReference type="GO" id="GO:0008061">
    <property type="term" value="F:chitin binding"/>
    <property type="evidence" value="ECO:0007669"/>
    <property type="project" value="UniProtKB-KW"/>
</dbReference>
<dbReference type="GO" id="GO:0008843">
    <property type="term" value="F:endochitinase activity"/>
    <property type="evidence" value="ECO:0007669"/>
    <property type="project" value="UniProtKB-EC"/>
</dbReference>
<dbReference type="GO" id="GO:0006032">
    <property type="term" value="P:chitin catabolic process"/>
    <property type="evidence" value="ECO:0007669"/>
    <property type="project" value="UniProtKB-KW"/>
</dbReference>
<dbReference type="GO" id="GO:0000272">
    <property type="term" value="P:polysaccharide catabolic process"/>
    <property type="evidence" value="ECO:0007669"/>
    <property type="project" value="UniProtKB-KW"/>
</dbReference>
<dbReference type="CDD" id="cd02877">
    <property type="entry name" value="GH18_hevamine_XipI_class_III"/>
    <property type="match status" value="1"/>
</dbReference>
<dbReference type="Gene3D" id="3.20.20.80">
    <property type="entry name" value="Glycosidases"/>
    <property type="match status" value="1"/>
</dbReference>
<dbReference type="InterPro" id="IPR035971">
    <property type="entry name" value="CBD_sf"/>
</dbReference>
<dbReference type="InterPro" id="IPR000254">
    <property type="entry name" value="Cellulose-bd_dom_fun"/>
</dbReference>
<dbReference type="InterPro" id="IPR045321">
    <property type="entry name" value="Cts1-like"/>
</dbReference>
<dbReference type="InterPro" id="IPR001223">
    <property type="entry name" value="Glyco_hydro18_cat"/>
</dbReference>
<dbReference type="InterPro" id="IPR001579">
    <property type="entry name" value="Glyco_hydro_18_chit_AS"/>
</dbReference>
<dbReference type="InterPro" id="IPR017853">
    <property type="entry name" value="Glycoside_hydrolase_SF"/>
</dbReference>
<dbReference type="InterPro" id="IPR050542">
    <property type="entry name" value="Glycosyl_Hydrlase18_Chitinase"/>
</dbReference>
<dbReference type="PANTHER" id="PTHR45708">
    <property type="entry name" value="ENDOCHITINASE"/>
    <property type="match status" value="1"/>
</dbReference>
<dbReference type="PANTHER" id="PTHR45708:SF49">
    <property type="entry name" value="ENDOCHITINASE"/>
    <property type="match status" value="1"/>
</dbReference>
<dbReference type="Pfam" id="PF00734">
    <property type="entry name" value="CBM_1"/>
    <property type="match status" value="1"/>
</dbReference>
<dbReference type="Pfam" id="PF00704">
    <property type="entry name" value="Glyco_hydro_18"/>
    <property type="match status" value="1"/>
</dbReference>
<dbReference type="SMART" id="SM00236">
    <property type="entry name" value="fCBD"/>
    <property type="match status" value="1"/>
</dbReference>
<dbReference type="SUPFAM" id="SSF51445">
    <property type="entry name" value="(Trans)glycosidases"/>
    <property type="match status" value="1"/>
</dbReference>
<dbReference type="SUPFAM" id="SSF57180">
    <property type="entry name" value="Cellulose-binding domain"/>
    <property type="match status" value="1"/>
</dbReference>
<dbReference type="PROSITE" id="PS51164">
    <property type="entry name" value="CBM1_2"/>
    <property type="match status" value="1"/>
</dbReference>
<dbReference type="PROSITE" id="PS01095">
    <property type="entry name" value="GH18_1"/>
    <property type="match status" value="1"/>
</dbReference>
<dbReference type="PROSITE" id="PS51910">
    <property type="entry name" value="GH18_2"/>
    <property type="match status" value="1"/>
</dbReference>
<keyword id="KW-0119">Carbohydrate metabolism</keyword>
<keyword id="KW-0146">Chitin degradation</keyword>
<keyword id="KW-0147">Chitin-binding</keyword>
<keyword id="KW-0325">Glycoprotein</keyword>
<keyword id="KW-0326">Glycosidase</keyword>
<keyword id="KW-0378">Hydrolase</keyword>
<keyword id="KW-0624">Polysaccharide degradation</keyword>
<keyword id="KW-0964">Secreted</keyword>
<keyword id="KW-0732">Signal</keyword>
<keyword id="KW-0843">Virulence</keyword>
<name>CHI2_METRA</name>
<comment type="function">
    <text evidence="1">Secreted chitinase involved in the degradation of chitin, a component of the cell walls of fungi and exoskeletal elements of some animals (including worms and arthropods). Participates in the infection process and directly acts in the penetration process of the host cuticle (By similarity).</text>
</comment>
<comment type="catalytic activity">
    <reaction>
        <text>Random endo-hydrolysis of N-acetyl-beta-D-glucosaminide (1-&gt;4)-beta-linkages in chitin and chitodextrins.</text>
        <dbReference type="EC" id="3.2.1.14"/>
    </reaction>
</comment>
<comment type="subcellular location">
    <subcellularLocation>
        <location evidence="1">Secreted</location>
    </subcellularLocation>
</comment>
<comment type="similarity">
    <text evidence="7">Belongs to the glycosyl hydrolase 18 family. Chitinase class III subfamily.</text>
</comment>
<evidence type="ECO:0000250" key="1"/>
<evidence type="ECO:0000255" key="2"/>
<evidence type="ECO:0000255" key="3">
    <source>
        <dbReference type="PROSITE-ProRule" id="PRU00498"/>
    </source>
</evidence>
<evidence type="ECO:0000255" key="4">
    <source>
        <dbReference type="PROSITE-ProRule" id="PRU00597"/>
    </source>
</evidence>
<evidence type="ECO:0000255" key="5">
    <source>
        <dbReference type="PROSITE-ProRule" id="PRU01258"/>
    </source>
</evidence>
<evidence type="ECO:0000256" key="6">
    <source>
        <dbReference type="SAM" id="MobiDB-lite"/>
    </source>
</evidence>
<evidence type="ECO:0000305" key="7"/>
<feature type="signal peptide" evidence="2">
    <location>
        <begin position="1"/>
        <end position="18"/>
    </location>
</feature>
<feature type="chain" id="PRO_0000429867" description="Endochitinase 2">
    <location>
        <begin position="19"/>
        <end position="419"/>
    </location>
</feature>
<feature type="domain" description="GH18" evidence="5">
    <location>
        <begin position="35"/>
        <end position="343"/>
    </location>
</feature>
<feature type="domain" description="CBM1" evidence="4">
    <location>
        <begin position="383"/>
        <end position="419"/>
    </location>
</feature>
<feature type="region of interest" description="Disordered" evidence="6">
    <location>
        <begin position="350"/>
        <end position="386"/>
    </location>
</feature>
<feature type="compositionally biased region" description="Low complexity" evidence="6">
    <location>
        <begin position="350"/>
        <end position="381"/>
    </location>
</feature>
<feature type="active site" description="Proton donor" evidence="5">
    <location>
        <position position="173"/>
    </location>
</feature>
<feature type="glycosylation site" description="N-linked (GlcNAc...) asparagine" evidence="3">
    <location>
        <position position="153"/>
    </location>
</feature>
<feature type="glycosylation site" description="N-linked (GlcNAc...) asparagine" evidence="3">
    <location>
        <position position="237"/>
    </location>
</feature>
<feature type="glycosylation site" description="N-linked (GlcNAc...) asparagine" evidence="3">
    <location>
        <position position="256"/>
    </location>
</feature>
<protein>
    <recommendedName>
        <fullName>Endochitinase 2</fullName>
        <ecNumber>3.2.1.14</ecNumber>
    </recommendedName>
    <alternativeName>
        <fullName>Chitinase 2</fullName>
    </alternativeName>
</protein>
<reference key="1">
    <citation type="journal article" date="2011" name="PLoS Genet.">
        <title>Genome sequencing and comparative transcriptomics of the model entomopathogenic fungi Metarhizium anisopliae and M. acridum.</title>
        <authorList>
            <person name="Gao Q."/>
            <person name="Jin K."/>
            <person name="Ying S.-H."/>
            <person name="Zhang Y."/>
            <person name="Xiao G."/>
            <person name="Shang Y."/>
            <person name="Duan Z."/>
            <person name="Hu X."/>
            <person name="Xie X.-Q."/>
            <person name="Zhou G."/>
            <person name="Peng G."/>
            <person name="Luo Z."/>
            <person name="Huang W."/>
            <person name="Wang B."/>
            <person name="Fang W."/>
            <person name="Wang S."/>
            <person name="Zhong Y."/>
            <person name="Ma L.-J."/>
            <person name="St Leger R.J."/>
            <person name="Zhao G.-P."/>
            <person name="Pei Y."/>
            <person name="Feng M.-G."/>
            <person name="Xia Y."/>
            <person name="Wang C."/>
        </authorList>
    </citation>
    <scope>NUCLEOTIDE SEQUENCE [LARGE SCALE GENOMIC DNA]</scope>
    <source>
        <strain>ARSEF 23 / ATCC MYA-3075</strain>
    </source>
</reference>
<reference key="2">
    <citation type="journal article" date="2014" name="Proc. Natl. Acad. Sci. U.S.A.">
        <title>Trajectory and genomic determinants of fungal-pathogen speciation and host adaptation.</title>
        <authorList>
            <person name="Hu X."/>
            <person name="Xiao G."/>
            <person name="Zheng P."/>
            <person name="Shang Y."/>
            <person name="Su Y."/>
            <person name="Zhang X."/>
            <person name="Liu X."/>
            <person name="Zhan S."/>
            <person name="St Leger R.J."/>
            <person name="Wang C."/>
        </authorList>
    </citation>
    <scope>GENOME REANNOTATION</scope>
    <source>
        <strain>ARSEF 23 / ATCC MYA-3075</strain>
    </source>
</reference>
<gene>
    <name type="primary">chi2</name>
    <name type="ORF">MAA_09018</name>
</gene>